<keyword id="KW-0249">Electron transport</keyword>
<keyword id="KW-0349">Heme</keyword>
<keyword id="KW-0408">Iron</keyword>
<keyword id="KW-0472">Membrane</keyword>
<keyword id="KW-0479">Metal-binding</keyword>
<keyword id="KW-0496">Mitochondrion</keyword>
<keyword id="KW-0999">Mitochondrion inner membrane</keyword>
<keyword id="KW-0679">Respiratory chain</keyword>
<keyword id="KW-0812">Transmembrane</keyword>
<keyword id="KW-1133">Transmembrane helix</keyword>
<keyword id="KW-0813">Transport</keyword>
<keyword id="KW-0830">Ubiquinone</keyword>
<protein>
    <recommendedName>
        <fullName>Cytochrome b</fullName>
    </recommendedName>
    <alternativeName>
        <fullName>Complex III subunit 3</fullName>
    </alternativeName>
    <alternativeName>
        <fullName>Complex III subunit III</fullName>
    </alternativeName>
    <alternativeName>
        <fullName>Cytochrome b-c1 complex subunit 3</fullName>
    </alternativeName>
    <alternativeName>
        <fullName>Ubiquinol-cytochrome-c reductase complex cytochrome b subunit</fullName>
    </alternativeName>
</protein>
<proteinExistence type="inferred from homology"/>
<gene>
    <name type="primary">MT-CYB</name>
    <name type="synonym">COB</name>
    <name type="synonym">CYTB</name>
    <name type="synonym">MTCYB</name>
</gene>
<name>CYB_PTEPU</name>
<feature type="chain" id="PRO_0000254853" description="Cytochrome b">
    <location>
        <begin position="1"/>
        <end position="379"/>
    </location>
</feature>
<feature type="transmembrane region" description="Helical" evidence="2">
    <location>
        <begin position="33"/>
        <end position="53"/>
    </location>
</feature>
<feature type="transmembrane region" description="Helical" evidence="2">
    <location>
        <begin position="77"/>
        <end position="98"/>
    </location>
</feature>
<feature type="transmembrane region" description="Helical" evidence="2">
    <location>
        <begin position="113"/>
        <end position="133"/>
    </location>
</feature>
<feature type="transmembrane region" description="Helical" evidence="2">
    <location>
        <begin position="178"/>
        <end position="198"/>
    </location>
</feature>
<feature type="transmembrane region" description="Helical" evidence="2">
    <location>
        <begin position="226"/>
        <end position="246"/>
    </location>
</feature>
<feature type="transmembrane region" description="Helical" evidence="2">
    <location>
        <begin position="288"/>
        <end position="308"/>
    </location>
</feature>
<feature type="transmembrane region" description="Helical" evidence="2">
    <location>
        <begin position="320"/>
        <end position="340"/>
    </location>
</feature>
<feature type="transmembrane region" description="Helical" evidence="2">
    <location>
        <begin position="347"/>
        <end position="367"/>
    </location>
</feature>
<feature type="binding site" description="axial binding residue" evidence="2">
    <location>
        <position position="83"/>
    </location>
    <ligand>
        <name>heme b</name>
        <dbReference type="ChEBI" id="CHEBI:60344"/>
        <label>b562</label>
    </ligand>
    <ligandPart>
        <name>Fe</name>
        <dbReference type="ChEBI" id="CHEBI:18248"/>
    </ligandPart>
</feature>
<feature type="binding site" description="axial binding residue" evidence="2">
    <location>
        <position position="97"/>
    </location>
    <ligand>
        <name>heme b</name>
        <dbReference type="ChEBI" id="CHEBI:60344"/>
        <label>b566</label>
    </ligand>
    <ligandPart>
        <name>Fe</name>
        <dbReference type="ChEBI" id="CHEBI:18248"/>
    </ligandPart>
</feature>
<feature type="binding site" description="axial binding residue" evidence="2">
    <location>
        <position position="182"/>
    </location>
    <ligand>
        <name>heme b</name>
        <dbReference type="ChEBI" id="CHEBI:60344"/>
        <label>b562</label>
    </ligand>
    <ligandPart>
        <name>Fe</name>
        <dbReference type="ChEBI" id="CHEBI:18248"/>
    </ligandPart>
</feature>
<feature type="binding site" description="axial binding residue" evidence="2">
    <location>
        <position position="196"/>
    </location>
    <ligand>
        <name>heme b</name>
        <dbReference type="ChEBI" id="CHEBI:60344"/>
        <label>b566</label>
    </ligand>
    <ligandPart>
        <name>Fe</name>
        <dbReference type="ChEBI" id="CHEBI:18248"/>
    </ligandPart>
</feature>
<feature type="binding site" evidence="2">
    <location>
        <position position="201"/>
    </location>
    <ligand>
        <name>a ubiquinone</name>
        <dbReference type="ChEBI" id="CHEBI:16389"/>
    </ligand>
</feature>
<comment type="function">
    <text evidence="2">Component of the ubiquinol-cytochrome c reductase complex (complex III or cytochrome b-c1 complex) that is part of the mitochondrial respiratory chain. The b-c1 complex mediates electron transfer from ubiquinol to cytochrome c. Contributes to the generation of a proton gradient across the mitochondrial membrane that is then used for ATP synthesis.</text>
</comment>
<comment type="cofactor">
    <cofactor evidence="2">
        <name>heme b</name>
        <dbReference type="ChEBI" id="CHEBI:60344"/>
    </cofactor>
    <text evidence="2">Binds 2 heme b groups non-covalently.</text>
</comment>
<comment type="subunit">
    <text evidence="2">The cytochrome bc1 complex contains 11 subunits: 3 respiratory subunits (MT-CYB, CYC1 and UQCRFS1), 2 core proteins (UQCRC1 and UQCRC2) and 6 low-molecular weight proteins (UQCRH/QCR6, UQCRB/QCR7, UQCRQ/QCR8, UQCR10/QCR9, UQCR11/QCR10 and a cleavage product of UQCRFS1). This cytochrome bc1 complex then forms a dimer.</text>
</comment>
<comment type="subcellular location">
    <subcellularLocation>
        <location evidence="2">Mitochondrion inner membrane</location>
        <topology evidence="2">Multi-pass membrane protein</topology>
    </subcellularLocation>
</comment>
<comment type="miscellaneous">
    <text evidence="1">Heme 1 (or BL or b562) is low-potential and absorbs at about 562 nm, and heme 2 (or BH or b566) is high-potential and absorbs at about 566 nm.</text>
</comment>
<comment type="similarity">
    <text evidence="3 4">Belongs to the cytochrome b family.</text>
</comment>
<comment type="caution">
    <text evidence="2">The full-length protein contains only eight transmembrane helices, not nine as predicted by bioinformatics tools.</text>
</comment>
<reference key="1">
    <citation type="journal article" date="2002" name="Biochem. Genet.">
        <title>Evolutionary relationships of flying foxes (Genus Pteropus) in the Philippines inferred from DNA sequences of cytochrome b gene.</title>
        <authorList>
            <person name="Bastian S.T. Jr."/>
            <person name="Tanaka K."/>
            <person name="Anunciado R.V.P."/>
            <person name="Natural N.G."/>
            <person name="Sumalde A.C."/>
            <person name="Namikawa T."/>
        </authorList>
    </citation>
    <scope>NUCLEOTIDE SEQUENCE [GENOMIC DNA]</scope>
</reference>
<geneLocation type="mitochondrion"/>
<dbReference type="EMBL" id="AB062473">
    <property type="protein sequence ID" value="BAB86371.1"/>
    <property type="molecule type" value="Genomic_DNA"/>
</dbReference>
<dbReference type="SMR" id="Q8SJZ3"/>
<dbReference type="GO" id="GO:0005743">
    <property type="term" value="C:mitochondrial inner membrane"/>
    <property type="evidence" value="ECO:0007669"/>
    <property type="project" value="UniProtKB-SubCell"/>
</dbReference>
<dbReference type="GO" id="GO:0045275">
    <property type="term" value="C:respiratory chain complex III"/>
    <property type="evidence" value="ECO:0007669"/>
    <property type="project" value="InterPro"/>
</dbReference>
<dbReference type="GO" id="GO:0046872">
    <property type="term" value="F:metal ion binding"/>
    <property type="evidence" value="ECO:0007669"/>
    <property type="project" value="UniProtKB-KW"/>
</dbReference>
<dbReference type="GO" id="GO:0008121">
    <property type="term" value="F:ubiquinol-cytochrome-c reductase activity"/>
    <property type="evidence" value="ECO:0007669"/>
    <property type="project" value="InterPro"/>
</dbReference>
<dbReference type="GO" id="GO:0006122">
    <property type="term" value="P:mitochondrial electron transport, ubiquinol to cytochrome c"/>
    <property type="evidence" value="ECO:0007669"/>
    <property type="project" value="TreeGrafter"/>
</dbReference>
<dbReference type="CDD" id="cd00290">
    <property type="entry name" value="cytochrome_b_C"/>
    <property type="match status" value="1"/>
</dbReference>
<dbReference type="CDD" id="cd00284">
    <property type="entry name" value="Cytochrome_b_N"/>
    <property type="match status" value="1"/>
</dbReference>
<dbReference type="FunFam" id="1.20.810.10:FF:000002">
    <property type="entry name" value="Cytochrome b"/>
    <property type="match status" value="1"/>
</dbReference>
<dbReference type="Gene3D" id="1.20.810.10">
    <property type="entry name" value="Cytochrome Bc1 Complex, Chain C"/>
    <property type="match status" value="1"/>
</dbReference>
<dbReference type="InterPro" id="IPR005798">
    <property type="entry name" value="Cyt_b/b6_C"/>
</dbReference>
<dbReference type="InterPro" id="IPR036150">
    <property type="entry name" value="Cyt_b/b6_C_sf"/>
</dbReference>
<dbReference type="InterPro" id="IPR005797">
    <property type="entry name" value="Cyt_b/b6_N"/>
</dbReference>
<dbReference type="InterPro" id="IPR027387">
    <property type="entry name" value="Cytb/b6-like_sf"/>
</dbReference>
<dbReference type="InterPro" id="IPR030689">
    <property type="entry name" value="Cytochrome_b"/>
</dbReference>
<dbReference type="InterPro" id="IPR048260">
    <property type="entry name" value="Cytochrome_b_C_euk/bac"/>
</dbReference>
<dbReference type="InterPro" id="IPR048259">
    <property type="entry name" value="Cytochrome_b_N_euk/bac"/>
</dbReference>
<dbReference type="InterPro" id="IPR016174">
    <property type="entry name" value="Di-haem_cyt_TM"/>
</dbReference>
<dbReference type="PANTHER" id="PTHR19271">
    <property type="entry name" value="CYTOCHROME B"/>
    <property type="match status" value="1"/>
</dbReference>
<dbReference type="PANTHER" id="PTHR19271:SF16">
    <property type="entry name" value="CYTOCHROME B"/>
    <property type="match status" value="1"/>
</dbReference>
<dbReference type="Pfam" id="PF00032">
    <property type="entry name" value="Cytochrom_B_C"/>
    <property type="match status" value="1"/>
</dbReference>
<dbReference type="Pfam" id="PF00033">
    <property type="entry name" value="Cytochrome_B"/>
    <property type="match status" value="1"/>
</dbReference>
<dbReference type="PIRSF" id="PIRSF038885">
    <property type="entry name" value="COB"/>
    <property type="match status" value="1"/>
</dbReference>
<dbReference type="SUPFAM" id="SSF81648">
    <property type="entry name" value="a domain/subunit of cytochrome bc1 complex (Ubiquinol-cytochrome c reductase)"/>
    <property type="match status" value="1"/>
</dbReference>
<dbReference type="SUPFAM" id="SSF81342">
    <property type="entry name" value="Transmembrane di-heme cytochromes"/>
    <property type="match status" value="1"/>
</dbReference>
<dbReference type="PROSITE" id="PS51003">
    <property type="entry name" value="CYTB_CTER"/>
    <property type="match status" value="1"/>
</dbReference>
<dbReference type="PROSITE" id="PS51002">
    <property type="entry name" value="CYTB_NTER"/>
    <property type="match status" value="1"/>
</dbReference>
<organism>
    <name type="scientific">Pteropus pumilus</name>
    <name type="common">Little golden-mantled flying fox</name>
    <dbReference type="NCBI Taxonomy" id="161598"/>
    <lineage>
        <taxon>Eukaryota</taxon>
        <taxon>Metazoa</taxon>
        <taxon>Chordata</taxon>
        <taxon>Craniata</taxon>
        <taxon>Vertebrata</taxon>
        <taxon>Euteleostomi</taxon>
        <taxon>Mammalia</taxon>
        <taxon>Eutheria</taxon>
        <taxon>Laurasiatheria</taxon>
        <taxon>Chiroptera</taxon>
        <taxon>Yinpterochiroptera</taxon>
        <taxon>Pteropodoidea</taxon>
        <taxon>Pteropodidae</taxon>
        <taxon>Pteropodinae</taxon>
        <taxon>Pteropus</taxon>
    </lineage>
</organism>
<evidence type="ECO:0000250" key="1"/>
<evidence type="ECO:0000250" key="2">
    <source>
        <dbReference type="UniProtKB" id="P00157"/>
    </source>
</evidence>
<evidence type="ECO:0000255" key="3">
    <source>
        <dbReference type="PROSITE-ProRule" id="PRU00967"/>
    </source>
</evidence>
<evidence type="ECO:0000255" key="4">
    <source>
        <dbReference type="PROSITE-ProRule" id="PRU00968"/>
    </source>
</evidence>
<sequence>MPNIRKSHPLFKIINDSLIDLPAPSSISSWWNFGSLLGICLAIQILTGLFLAMHYTSDTTTAFQSVTHICRDVNYGWILRYLHANGASMFFICLFLHVGRGLYYGSYVYKETWNVGVILLFAVMATAFMGYVLPWGPMSFWGATVITNLLSAIPYIGTNLVEWIWGGFSVDKGTLTRFFAFHFLLPFIISALVLVHLLFLHETGSNNPTGIPSDSDMIPFHPYYTIKDMLGALAMVLALLMLVLFSPDLLGDPDNYIPANPLNTPPHIKPEWYFLFAYAILRSIPNKLGGVLALVLSILILILMPLLHTSKQRSMMFRPLSQCMFWLLVADLLTLTWIGGQPVEHPFIIIGQLASILYFLLILVLMPITSIVENHLLKW</sequence>
<accession>Q8SJZ3</accession>